<evidence type="ECO:0000255" key="1">
    <source>
        <dbReference type="HAMAP-Rule" id="MF_00531"/>
    </source>
</evidence>
<evidence type="ECO:0000305" key="2"/>
<proteinExistence type="inferred from homology"/>
<name>RS19_CROS5</name>
<reference key="1">
    <citation type="journal article" date="2008" name="Proc. Natl. Acad. Sci. U.S.A.">
        <title>The genome of Cyanothece 51142, a unicellular diazotrophic cyanobacterium important in the marine nitrogen cycle.</title>
        <authorList>
            <person name="Welsh E.A."/>
            <person name="Liberton M."/>
            <person name="Stoeckel J."/>
            <person name="Loh T."/>
            <person name="Elvitigala T."/>
            <person name="Wang C."/>
            <person name="Wollam A."/>
            <person name="Fulton R.S."/>
            <person name="Clifton S.W."/>
            <person name="Jacobs J.M."/>
            <person name="Aurora R."/>
            <person name="Ghosh B.K."/>
            <person name="Sherman L.A."/>
            <person name="Smith R.D."/>
            <person name="Wilson R.K."/>
            <person name="Pakrasi H.B."/>
        </authorList>
    </citation>
    <scope>NUCLEOTIDE SEQUENCE [LARGE SCALE GENOMIC DNA]</scope>
    <source>
        <strain>ATCC 51142 / BH68</strain>
    </source>
</reference>
<sequence>MSRSLKKGPFIADSLLTKIEKLNEKGDKQVIKTWSRASTIIPAMIGHTIAVHNGKQHVPIFISEQMVGHKLGEFAPTRTFRGHSKGDKKARR</sequence>
<gene>
    <name evidence="1" type="primary">rpsS</name>
    <name evidence="1" type="synonym">rps19</name>
    <name type="ordered locus">cce_4018</name>
</gene>
<comment type="function">
    <text evidence="1">Protein S19 forms a complex with S13 that binds strongly to the 16S ribosomal RNA.</text>
</comment>
<comment type="similarity">
    <text evidence="1">Belongs to the universal ribosomal protein uS19 family.</text>
</comment>
<organism>
    <name type="scientific">Crocosphaera subtropica (strain ATCC 51142 / BH68)</name>
    <name type="common">Cyanothece sp. (strain ATCC 51142)</name>
    <dbReference type="NCBI Taxonomy" id="43989"/>
    <lineage>
        <taxon>Bacteria</taxon>
        <taxon>Bacillati</taxon>
        <taxon>Cyanobacteriota</taxon>
        <taxon>Cyanophyceae</taxon>
        <taxon>Oscillatoriophycideae</taxon>
        <taxon>Chroococcales</taxon>
        <taxon>Aphanothecaceae</taxon>
        <taxon>Crocosphaera</taxon>
        <taxon>Crocosphaera subtropica</taxon>
    </lineage>
</organism>
<dbReference type="EMBL" id="CP000806">
    <property type="protein sequence ID" value="ACB53366.1"/>
    <property type="molecule type" value="Genomic_DNA"/>
</dbReference>
<dbReference type="RefSeq" id="WP_009543892.1">
    <property type="nucleotide sequence ID" value="NC_010546.1"/>
</dbReference>
<dbReference type="SMR" id="B1WQR4"/>
<dbReference type="STRING" id="43989.cce_4018"/>
<dbReference type="KEGG" id="cyt:cce_4018"/>
<dbReference type="eggNOG" id="COG0185">
    <property type="taxonomic scope" value="Bacteria"/>
</dbReference>
<dbReference type="HOGENOM" id="CLU_144911_0_1_3"/>
<dbReference type="OrthoDB" id="9797833at2"/>
<dbReference type="Proteomes" id="UP000001203">
    <property type="component" value="Chromosome circular"/>
</dbReference>
<dbReference type="GO" id="GO:0005737">
    <property type="term" value="C:cytoplasm"/>
    <property type="evidence" value="ECO:0007669"/>
    <property type="project" value="UniProtKB-ARBA"/>
</dbReference>
<dbReference type="GO" id="GO:0015935">
    <property type="term" value="C:small ribosomal subunit"/>
    <property type="evidence" value="ECO:0007669"/>
    <property type="project" value="InterPro"/>
</dbReference>
<dbReference type="GO" id="GO:0019843">
    <property type="term" value="F:rRNA binding"/>
    <property type="evidence" value="ECO:0007669"/>
    <property type="project" value="UniProtKB-UniRule"/>
</dbReference>
<dbReference type="GO" id="GO:0003735">
    <property type="term" value="F:structural constituent of ribosome"/>
    <property type="evidence" value="ECO:0007669"/>
    <property type="project" value="InterPro"/>
</dbReference>
<dbReference type="GO" id="GO:0000028">
    <property type="term" value="P:ribosomal small subunit assembly"/>
    <property type="evidence" value="ECO:0007669"/>
    <property type="project" value="TreeGrafter"/>
</dbReference>
<dbReference type="GO" id="GO:0006412">
    <property type="term" value="P:translation"/>
    <property type="evidence" value="ECO:0007669"/>
    <property type="project" value="UniProtKB-UniRule"/>
</dbReference>
<dbReference type="FunFam" id="3.30.860.10:FF:000001">
    <property type="entry name" value="30S ribosomal protein S19"/>
    <property type="match status" value="1"/>
</dbReference>
<dbReference type="Gene3D" id="3.30.860.10">
    <property type="entry name" value="30s Ribosomal Protein S19, Chain A"/>
    <property type="match status" value="1"/>
</dbReference>
<dbReference type="HAMAP" id="MF_00531">
    <property type="entry name" value="Ribosomal_uS19"/>
    <property type="match status" value="1"/>
</dbReference>
<dbReference type="InterPro" id="IPR002222">
    <property type="entry name" value="Ribosomal_uS19"/>
</dbReference>
<dbReference type="InterPro" id="IPR005732">
    <property type="entry name" value="Ribosomal_uS19_bac-type"/>
</dbReference>
<dbReference type="InterPro" id="IPR020934">
    <property type="entry name" value="Ribosomal_uS19_CS"/>
</dbReference>
<dbReference type="InterPro" id="IPR023575">
    <property type="entry name" value="Ribosomal_uS19_SF"/>
</dbReference>
<dbReference type="NCBIfam" id="TIGR01050">
    <property type="entry name" value="rpsS_bact"/>
    <property type="match status" value="1"/>
</dbReference>
<dbReference type="PANTHER" id="PTHR11880">
    <property type="entry name" value="RIBOSOMAL PROTEIN S19P FAMILY MEMBER"/>
    <property type="match status" value="1"/>
</dbReference>
<dbReference type="PANTHER" id="PTHR11880:SF8">
    <property type="entry name" value="SMALL RIBOSOMAL SUBUNIT PROTEIN US19M"/>
    <property type="match status" value="1"/>
</dbReference>
<dbReference type="Pfam" id="PF00203">
    <property type="entry name" value="Ribosomal_S19"/>
    <property type="match status" value="1"/>
</dbReference>
<dbReference type="PIRSF" id="PIRSF002144">
    <property type="entry name" value="Ribosomal_S19"/>
    <property type="match status" value="1"/>
</dbReference>
<dbReference type="PRINTS" id="PR00975">
    <property type="entry name" value="RIBOSOMALS19"/>
</dbReference>
<dbReference type="SUPFAM" id="SSF54570">
    <property type="entry name" value="Ribosomal protein S19"/>
    <property type="match status" value="1"/>
</dbReference>
<dbReference type="PROSITE" id="PS00323">
    <property type="entry name" value="RIBOSOMAL_S19"/>
    <property type="match status" value="1"/>
</dbReference>
<keyword id="KW-1185">Reference proteome</keyword>
<keyword id="KW-0687">Ribonucleoprotein</keyword>
<keyword id="KW-0689">Ribosomal protein</keyword>
<keyword id="KW-0694">RNA-binding</keyword>
<keyword id="KW-0699">rRNA-binding</keyword>
<feature type="chain" id="PRO_1000146384" description="Small ribosomal subunit protein uS19">
    <location>
        <begin position="1"/>
        <end position="92"/>
    </location>
</feature>
<accession>B1WQR4</accession>
<protein>
    <recommendedName>
        <fullName evidence="1">Small ribosomal subunit protein uS19</fullName>
    </recommendedName>
    <alternativeName>
        <fullName evidence="2">30S ribosomal protein S19</fullName>
    </alternativeName>
</protein>